<organism>
    <name type="scientific">Azotobacter vinelandii (strain DJ / ATCC BAA-1303)</name>
    <dbReference type="NCBI Taxonomy" id="322710"/>
    <lineage>
        <taxon>Bacteria</taxon>
        <taxon>Pseudomonadati</taxon>
        <taxon>Pseudomonadota</taxon>
        <taxon>Gammaproteobacteria</taxon>
        <taxon>Pseudomonadales</taxon>
        <taxon>Pseudomonadaceae</taxon>
        <taxon>Azotobacter</taxon>
    </lineage>
</organism>
<comment type="function">
    <text evidence="1">Redox regulated molecular chaperone. Protects both thermally unfolding and oxidatively damaged proteins from irreversible aggregation. Plays an important role in the bacterial defense system toward oxidative stress.</text>
</comment>
<comment type="subcellular location">
    <subcellularLocation>
        <location evidence="1">Cytoplasm</location>
    </subcellularLocation>
</comment>
<comment type="PTM">
    <text evidence="1">Under oxidizing conditions two disulfide bonds are formed involving the reactive cysteines. Under reducing conditions zinc is bound to the reactive cysteines and the protein is inactive.</text>
</comment>
<comment type="similarity">
    <text evidence="1">Belongs to the HSP33 family.</text>
</comment>
<name>HSLO_AZOVD</name>
<feature type="chain" id="PRO_1000202992" description="33 kDa chaperonin">
    <location>
        <begin position="1"/>
        <end position="297"/>
    </location>
</feature>
<feature type="disulfide bond" description="Redox-active" evidence="1">
    <location>
        <begin position="232"/>
        <end position="234"/>
    </location>
</feature>
<feature type="disulfide bond" description="Redox-active" evidence="1">
    <location>
        <begin position="266"/>
        <end position="269"/>
    </location>
</feature>
<keyword id="KW-0143">Chaperone</keyword>
<keyword id="KW-0963">Cytoplasm</keyword>
<keyword id="KW-1015">Disulfide bond</keyword>
<keyword id="KW-0676">Redox-active center</keyword>
<keyword id="KW-0862">Zinc</keyword>
<gene>
    <name evidence="1" type="primary">hslO</name>
    <name type="ordered locus">Avin_05430</name>
</gene>
<protein>
    <recommendedName>
        <fullName evidence="1">33 kDa chaperonin</fullName>
    </recommendedName>
    <alternativeName>
        <fullName evidence="1">Heat shock protein 33 homolog</fullName>
        <shortName evidence="1">HSP33</shortName>
    </alternativeName>
</protein>
<accession>C1DKD3</accession>
<sequence length="297" mass="33058">MSDFDFTQRFLFDDTDVRGELADLRGSYAEVLAKHPYPEPVAQLLGEMLAAAALLVGTLKFDGLLVLQARSPGPIPLLMVECSSEREVRGIARYHAEQVEPGAGLRELMPEGLLTLTIDPRRGQRYQGIVELRGESLADCLSGYFADSEQLPTRFWLNADGRRARGLLLQQLPADRLKDAEARTLNWEHLVTLADTLTAEELLGLDNETLLRRLYHQEAVRLFEPLPLRFRCSCSRERSANALSSLGQADAEQLLRERDGLVVVDCQFCNQRYEFDATDIAQLFAGGGSGAPSATRH</sequence>
<proteinExistence type="inferred from homology"/>
<dbReference type="EMBL" id="CP001157">
    <property type="protein sequence ID" value="ACO76796.1"/>
    <property type="molecule type" value="Genomic_DNA"/>
</dbReference>
<dbReference type="RefSeq" id="WP_012699224.1">
    <property type="nucleotide sequence ID" value="NC_012560.1"/>
</dbReference>
<dbReference type="SMR" id="C1DKD3"/>
<dbReference type="STRING" id="322710.Avin_05430"/>
<dbReference type="EnsemblBacteria" id="ACO76796">
    <property type="protein sequence ID" value="ACO76796"/>
    <property type="gene ID" value="Avin_05430"/>
</dbReference>
<dbReference type="GeneID" id="88183962"/>
<dbReference type="KEGG" id="avn:Avin_05430"/>
<dbReference type="eggNOG" id="COG1281">
    <property type="taxonomic scope" value="Bacteria"/>
</dbReference>
<dbReference type="HOGENOM" id="CLU_054493_0_0_6"/>
<dbReference type="OrthoDB" id="9793753at2"/>
<dbReference type="Proteomes" id="UP000002424">
    <property type="component" value="Chromosome"/>
</dbReference>
<dbReference type="GO" id="GO:0005737">
    <property type="term" value="C:cytoplasm"/>
    <property type="evidence" value="ECO:0007669"/>
    <property type="project" value="UniProtKB-SubCell"/>
</dbReference>
<dbReference type="GO" id="GO:0044183">
    <property type="term" value="F:protein folding chaperone"/>
    <property type="evidence" value="ECO:0007669"/>
    <property type="project" value="TreeGrafter"/>
</dbReference>
<dbReference type="GO" id="GO:0051082">
    <property type="term" value="F:unfolded protein binding"/>
    <property type="evidence" value="ECO:0007669"/>
    <property type="project" value="UniProtKB-UniRule"/>
</dbReference>
<dbReference type="GO" id="GO:0042026">
    <property type="term" value="P:protein refolding"/>
    <property type="evidence" value="ECO:0007669"/>
    <property type="project" value="TreeGrafter"/>
</dbReference>
<dbReference type="CDD" id="cd00498">
    <property type="entry name" value="Hsp33"/>
    <property type="match status" value="1"/>
</dbReference>
<dbReference type="Gene3D" id="1.10.287.480">
    <property type="entry name" value="helix hairpin bin"/>
    <property type="match status" value="1"/>
</dbReference>
<dbReference type="Gene3D" id="3.55.30.10">
    <property type="entry name" value="Hsp33 domain"/>
    <property type="match status" value="1"/>
</dbReference>
<dbReference type="Gene3D" id="3.90.1280.10">
    <property type="entry name" value="HSP33 redox switch-like"/>
    <property type="match status" value="1"/>
</dbReference>
<dbReference type="HAMAP" id="MF_00117">
    <property type="entry name" value="HslO"/>
    <property type="match status" value="1"/>
</dbReference>
<dbReference type="InterPro" id="IPR000397">
    <property type="entry name" value="Heat_shock_Hsp33"/>
</dbReference>
<dbReference type="InterPro" id="IPR016154">
    <property type="entry name" value="Heat_shock_Hsp33_C"/>
</dbReference>
<dbReference type="InterPro" id="IPR016153">
    <property type="entry name" value="Heat_shock_Hsp33_N"/>
</dbReference>
<dbReference type="InterPro" id="IPR023212">
    <property type="entry name" value="Hsp33_helix_hairpin_bin_dom_sf"/>
</dbReference>
<dbReference type="NCBIfam" id="NF001033">
    <property type="entry name" value="PRK00114.1"/>
    <property type="match status" value="1"/>
</dbReference>
<dbReference type="PANTHER" id="PTHR30111">
    <property type="entry name" value="33 KDA CHAPERONIN"/>
    <property type="match status" value="1"/>
</dbReference>
<dbReference type="PANTHER" id="PTHR30111:SF1">
    <property type="entry name" value="33 KDA CHAPERONIN"/>
    <property type="match status" value="1"/>
</dbReference>
<dbReference type="Pfam" id="PF01430">
    <property type="entry name" value="HSP33"/>
    <property type="match status" value="1"/>
</dbReference>
<dbReference type="PIRSF" id="PIRSF005261">
    <property type="entry name" value="Heat_shock_Hsp33"/>
    <property type="match status" value="1"/>
</dbReference>
<dbReference type="SUPFAM" id="SSF64397">
    <property type="entry name" value="Hsp33 domain"/>
    <property type="match status" value="1"/>
</dbReference>
<dbReference type="SUPFAM" id="SSF118352">
    <property type="entry name" value="HSP33 redox switch-like"/>
    <property type="match status" value="1"/>
</dbReference>
<evidence type="ECO:0000255" key="1">
    <source>
        <dbReference type="HAMAP-Rule" id="MF_00117"/>
    </source>
</evidence>
<reference key="1">
    <citation type="journal article" date="2009" name="J. Bacteriol.">
        <title>Genome sequence of Azotobacter vinelandii, an obligate aerobe specialized to support diverse anaerobic metabolic processes.</title>
        <authorList>
            <person name="Setubal J.C."/>
            <person name="Dos Santos P."/>
            <person name="Goldman B.S."/>
            <person name="Ertesvaag H."/>
            <person name="Espin G."/>
            <person name="Rubio L.M."/>
            <person name="Valla S."/>
            <person name="Almeida N.F."/>
            <person name="Balasubramanian D."/>
            <person name="Cromes L."/>
            <person name="Curatti L."/>
            <person name="Du Z."/>
            <person name="Godsy E."/>
            <person name="Goodner B."/>
            <person name="Hellner-Burris K."/>
            <person name="Hernandez J.A."/>
            <person name="Houmiel K."/>
            <person name="Imperial J."/>
            <person name="Kennedy C."/>
            <person name="Larson T.J."/>
            <person name="Latreille P."/>
            <person name="Ligon L.S."/>
            <person name="Lu J."/>
            <person name="Maerk M."/>
            <person name="Miller N.M."/>
            <person name="Norton S."/>
            <person name="O'Carroll I.P."/>
            <person name="Paulsen I."/>
            <person name="Raulfs E.C."/>
            <person name="Roemer R."/>
            <person name="Rosser J."/>
            <person name="Segura D."/>
            <person name="Slater S."/>
            <person name="Stricklin S.L."/>
            <person name="Studholme D.J."/>
            <person name="Sun J."/>
            <person name="Viana C.J."/>
            <person name="Wallin E."/>
            <person name="Wang B."/>
            <person name="Wheeler C."/>
            <person name="Zhu H."/>
            <person name="Dean D.R."/>
            <person name="Dixon R."/>
            <person name="Wood D."/>
        </authorList>
    </citation>
    <scope>NUCLEOTIDE SEQUENCE [LARGE SCALE GENOMIC DNA]</scope>
    <source>
        <strain>DJ / ATCC BAA-1303</strain>
    </source>
</reference>